<protein>
    <recommendedName>
        <fullName>Membrin-11</fullName>
        <shortName>AtMEMB11</shortName>
    </recommendedName>
    <alternativeName>
        <fullName>27 kDa Golgi SNARE protein</fullName>
    </alternativeName>
    <alternativeName>
        <fullName>Golgi SNAP receptor complex member 2-1</fullName>
    </alternativeName>
</protein>
<dbReference type="EMBL" id="AC006922">
    <property type="protein sequence ID" value="AAD31575.1"/>
    <property type="molecule type" value="Genomic_DNA"/>
</dbReference>
<dbReference type="EMBL" id="CP002685">
    <property type="protein sequence ID" value="AEC09318.1"/>
    <property type="molecule type" value="Genomic_DNA"/>
</dbReference>
<dbReference type="EMBL" id="AY063816">
    <property type="protein sequence ID" value="AAL36172.1"/>
    <property type="molecule type" value="mRNA"/>
</dbReference>
<dbReference type="EMBL" id="AY091350">
    <property type="protein sequence ID" value="AAM14289.1"/>
    <property type="molecule type" value="mRNA"/>
</dbReference>
<dbReference type="EMBL" id="AY086341">
    <property type="protein sequence ID" value="AAM64409.1"/>
    <property type="molecule type" value="mRNA"/>
</dbReference>
<dbReference type="PIR" id="A84786">
    <property type="entry name" value="A84786"/>
</dbReference>
<dbReference type="RefSeq" id="NP_181227.1">
    <molecule id="Q9SJL6-1"/>
    <property type="nucleotide sequence ID" value="NM_129246.3"/>
</dbReference>
<dbReference type="SMR" id="Q9SJL6"/>
<dbReference type="BioGRID" id="3608">
    <property type="interactions" value="2"/>
</dbReference>
<dbReference type="FunCoup" id="Q9SJL6">
    <property type="interactions" value="4083"/>
</dbReference>
<dbReference type="IntAct" id="Q9SJL6">
    <property type="interactions" value="2"/>
</dbReference>
<dbReference type="STRING" id="3702.Q9SJL6"/>
<dbReference type="iPTMnet" id="Q9SJL6"/>
<dbReference type="PaxDb" id="3702-AT2G36900.1"/>
<dbReference type="ProteomicsDB" id="250682">
    <molecule id="Q9SJL6-1"/>
</dbReference>
<dbReference type="EnsemblPlants" id="AT2G36900.1">
    <molecule id="Q9SJL6-1"/>
    <property type="protein sequence ID" value="AT2G36900.1"/>
    <property type="gene ID" value="AT2G36900"/>
</dbReference>
<dbReference type="GeneID" id="818264"/>
<dbReference type="Gramene" id="AT2G36900.1">
    <molecule id="Q9SJL6-1"/>
    <property type="protein sequence ID" value="AT2G36900.1"/>
    <property type="gene ID" value="AT2G36900"/>
</dbReference>
<dbReference type="KEGG" id="ath:AT2G36900"/>
<dbReference type="Araport" id="AT2G36900"/>
<dbReference type="TAIR" id="AT2G36900">
    <property type="gene designation" value="MEMB11"/>
</dbReference>
<dbReference type="eggNOG" id="KOG3251">
    <property type="taxonomic scope" value="Eukaryota"/>
</dbReference>
<dbReference type="HOGENOM" id="CLU_083740_1_0_1"/>
<dbReference type="InParanoid" id="Q9SJL6"/>
<dbReference type="OMA" id="LKYDSRH"/>
<dbReference type="OrthoDB" id="158360at2759"/>
<dbReference type="PhylomeDB" id="Q9SJL6"/>
<dbReference type="PRO" id="PR:Q9SJL6"/>
<dbReference type="Proteomes" id="UP000006548">
    <property type="component" value="Chromosome 2"/>
</dbReference>
<dbReference type="ExpressionAtlas" id="Q9SJL6">
    <property type="expression patterns" value="baseline and differential"/>
</dbReference>
<dbReference type="GO" id="GO:0000139">
    <property type="term" value="C:Golgi membrane"/>
    <property type="evidence" value="ECO:0007669"/>
    <property type="project" value="UniProtKB-SubCell"/>
</dbReference>
<dbReference type="GO" id="GO:0005484">
    <property type="term" value="F:SNAP receptor activity"/>
    <property type="evidence" value="ECO:0007669"/>
    <property type="project" value="InterPro"/>
</dbReference>
<dbReference type="GO" id="GO:0015031">
    <property type="term" value="P:protein transport"/>
    <property type="evidence" value="ECO:0007669"/>
    <property type="project" value="UniProtKB-KW"/>
</dbReference>
<dbReference type="GO" id="GO:0016192">
    <property type="term" value="P:vesicle-mediated transport"/>
    <property type="evidence" value="ECO:0007669"/>
    <property type="project" value="InterPro"/>
</dbReference>
<dbReference type="CDD" id="cd15863">
    <property type="entry name" value="SNARE_GS27"/>
    <property type="match status" value="1"/>
</dbReference>
<dbReference type="Gene3D" id="1.20.5.110">
    <property type="match status" value="1"/>
</dbReference>
<dbReference type="InterPro" id="IPR027027">
    <property type="entry name" value="GOSR2/Membrin/Bos1"/>
</dbReference>
<dbReference type="PANTHER" id="PTHR21230:SF1">
    <property type="entry name" value="GOLGI SNAP RECEPTOR COMPLEX MEMBER 2"/>
    <property type="match status" value="1"/>
</dbReference>
<dbReference type="PANTHER" id="PTHR21230">
    <property type="entry name" value="VESICLE TRANSPORT V-SNARE PROTEIN VTI1-RELATED"/>
    <property type="match status" value="1"/>
</dbReference>
<dbReference type="Pfam" id="PF12352">
    <property type="entry name" value="V-SNARE_C"/>
    <property type="match status" value="1"/>
</dbReference>
<dbReference type="PIRSF" id="PIRSF028865">
    <property type="entry name" value="Membrin-2"/>
    <property type="match status" value="1"/>
</dbReference>
<dbReference type="SUPFAM" id="SSF58038">
    <property type="entry name" value="SNARE fusion complex"/>
    <property type="match status" value="1"/>
</dbReference>
<feature type="initiator methionine" description="Removed" evidence="4">
    <location>
        <position position="1"/>
    </location>
</feature>
<feature type="chain" id="PRO_0000212554" description="Membrin-11">
    <location>
        <begin position="2"/>
        <end position="225"/>
    </location>
</feature>
<feature type="topological domain" description="Cytoplasmic" evidence="2">
    <location>
        <begin position="2"/>
        <end position="200"/>
    </location>
</feature>
<feature type="transmembrane region" description="Helical; Anchor for type IV membrane protein" evidence="2">
    <location>
        <begin position="201"/>
        <end position="221"/>
    </location>
</feature>
<feature type="topological domain" description="Vesicular" evidence="2">
    <location>
        <begin position="222"/>
        <end position="225"/>
    </location>
</feature>
<feature type="modified residue" description="N-acetylalanine" evidence="4">
    <location>
        <position position="2"/>
    </location>
</feature>
<sequence>MASGIVEGGGSLSDVYSSAKRILLKARDGIERLERFESSSMDSPDLASSVKRDITEVRSLCSNMDTLWRSIPVKSQRDLWRRKTEQVGEEAEYLNLSLEKYMSRNQRKMLEAKERADLLGRASGEGAHILQIFDEEAQAMSSVKNSKRMLEESFSSGVAILSKYAEQRDRLKSAQRKALDVLNTVGLSNSVLRLIERRNRVDTWIKYAGMIATLVILYLFIRWTR</sequence>
<gene>
    <name type="primary">MEMB11</name>
    <name type="ordered locus">At2g36900</name>
    <name type="ORF">T1J8.8</name>
</gene>
<name>MEM11_ARATH</name>
<comment type="function">
    <text evidence="1">Involved in transport of proteins from the cis/medial-Golgi to the trans-Golgi network.</text>
</comment>
<comment type="subcellular location">
    <subcellularLocation>
        <location evidence="3">Golgi apparatus membrane</location>
        <topology evidence="3">Single-pass type IV membrane protein</topology>
    </subcellularLocation>
</comment>
<comment type="alternative products">
    <event type="alternative splicing"/>
    <isoform>
        <id>Q9SJL6-1</id>
        <name>1</name>
        <sequence type="displayed"/>
    </isoform>
    <text>A number of isoforms are produced. According to EST sequences.</text>
</comment>
<comment type="similarity">
    <text evidence="3">Belongs to the GOSR2 family.</text>
</comment>
<organism>
    <name type="scientific">Arabidopsis thaliana</name>
    <name type="common">Mouse-ear cress</name>
    <dbReference type="NCBI Taxonomy" id="3702"/>
    <lineage>
        <taxon>Eukaryota</taxon>
        <taxon>Viridiplantae</taxon>
        <taxon>Streptophyta</taxon>
        <taxon>Embryophyta</taxon>
        <taxon>Tracheophyta</taxon>
        <taxon>Spermatophyta</taxon>
        <taxon>Magnoliopsida</taxon>
        <taxon>eudicotyledons</taxon>
        <taxon>Gunneridae</taxon>
        <taxon>Pentapetalae</taxon>
        <taxon>rosids</taxon>
        <taxon>malvids</taxon>
        <taxon>Brassicales</taxon>
        <taxon>Brassicaceae</taxon>
        <taxon>Camelineae</taxon>
        <taxon>Arabidopsis</taxon>
    </lineage>
</organism>
<reference key="1">
    <citation type="journal article" date="1999" name="Nature">
        <title>Sequence and analysis of chromosome 2 of the plant Arabidopsis thaliana.</title>
        <authorList>
            <person name="Lin X."/>
            <person name="Kaul S."/>
            <person name="Rounsley S.D."/>
            <person name="Shea T.P."/>
            <person name="Benito M.-I."/>
            <person name="Town C.D."/>
            <person name="Fujii C.Y."/>
            <person name="Mason T.M."/>
            <person name="Bowman C.L."/>
            <person name="Barnstead M.E."/>
            <person name="Feldblyum T.V."/>
            <person name="Buell C.R."/>
            <person name="Ketchum K.A."/>
            <person name="Lee J.J."/>
            <person name="Ronning C.M."/>
            <person name="Koo H.L."/>
            <person name="Moffat K.S."/>
            <person name="Cronin L.A."/>
            <person name="Shen M."/>
            <person name="Pai G."/>
            <person name="Van Aken S."/>
            <person name="Umayam L."/>
            <person name="Tallon L.J."/>
            <person name="Gill J.E."/>
            <person name="Adams M.D."/>
            <person name="Carrera A.J."/>
            <person name="Creasy T.H."/>
            <person name="Goodman H.M."/>
            <person name="Somerville C.R."/>
            <person name="Copenhaver G.P."/>
            <person name="Preuss D."/>
            <person name="Nierman W.C."/>
            <person name="White O."/>
            <person name="Eisen J.A."/>
            <person name="Salzberg S.L."/>
            <person name="Fraser C.M."/>
            <person name="Venter J.C."/>
        </authorList>
    </citation>
    <scope>NUCLEOTIDE SEQUENCE [LARGE SCALE GENOMIC DNA]</scope>
    <source>
        <strain>cv. Columbia</strain>
    </source>
</reference>
<reference key="2">
    <citation type="journal article" date="2017" name="Plant J.">
        <title>Araport11: a complete reannotation of the Arabidopsis thaliana reference genome.</title>
        <authorList>
            <person name="Cheng C.Y."/>
            <person name="Krishnakumar V."/>
            <person name="Chan A.P."/>
            <person name="Thibaud-Nissen F."/>
            <person name="Schobel S."/>
            <person name="Town C.D."/>
        </authorList>
    </citation>
    <scope>GENOME REANNOTATION</scope>
    <source>
        <strain>cv. Columbia</strain>
    </source>
</reference>
<reference key="3">
    <citation type="journal article" date="2003" name="Science">
        <title>Empirical analysis of transcriptional activity in the Arabidopsis genome.</title>
        <authorList>
            <person name="Yamada K."/>
            <person name="Lim J."/>
            <person name="Dale J.M."/>
            <person name="Chen H."/>
            <person name="Shinn P."/>
            <person name="Palm C.J."/>
            <person name="Southwick A.M."/>
            <person name="Wu H.C."/>
            <person name="Kim C.J."/>
            <person name="Nguyen M."/>
            <person name="Pham P.K."/>
            <person name="Cheuk R.F."/>
            <person name="Karlin-Newmann G."/>
            <person name="Liu S.X."/>
            <person name="Lam B."/>
            <person name="Sakano H."/>
            <person name="Wu T."/>
            <person name="Yu G."/>
            <person name="Miranda M."/>
            <person name="Quach H.L."/>
            <person name="Tripp M."/>
            <person name="Chang C.H."/>
            <person name="Lee J.M."/>
            <person name="Toriumi M.J."/>
            <person name="Chan M.M."/>
            <person name="Tang C.C."/>
            <person name="Onodera C.S."/>
            <person name="Deng J.M."/>
            <person name="Akiyama K."/>
            <person name="Ansari Y."/>
            <person name="Arakawa T."/>
            <person name="Banh J."/>
            <person name="Banno F."/>
            <person name="Bowser L."/>
            <person name="Brooks S.Y."/>
            <person name="Carninci P."/>
            <person name="Chao Q."/>
            <person name="Choy N."/>
            <person name="Enju A."/>
            <person name="Goldsmith A.D."/>
            <person name="Gurjal M."/>
            <person name="Hansen N.F."/>
            <person name="Hayashizaki Y."/>
            <person name="Johnson-Hopson C."/>
            <person name="Hsuan V.W."/>
            <person name="Iida K."/>
            <person name="Karnes M."/>
            <person name="Khan S."/>
            <person name="Koesema E."/>
            <person name="Ishida J."/>
            <person name="Jiang P.X."/>
            <person name="Jones T."/>
            <person name="Kawai J."/>
            <person name="Kamiya A."/>
            <person name="Meyers C."/>
            <person name="Nakajima M."/>
            <person name="Narusaka M."/>
            <person name="Seki M."/>
            <person name="Sakurai T."/>
            <person name="Satou M."/>
            <person name="Tamse R."/>
            <person name="Vaysberg M."/>
            <person name="Wallender E.K."/>
            <person name="Wong C."/>
            <person name="Yamamura Y."/>
            <person name="Yuan S."/>
            <person name="Shinozaki K."/>
            <person name="Davis R.W."/>
            <person name="Theologis A."/>
            <person name="Ecker J.R."/>
        </authorList>
    </citation>
    <scope>NUCLEOTIDE SEQUENCE [LARGE SCALE MRNA]</scope>
    <source>
        <strain>cv. Columbia</strain>
    </source>
</reference>
<reference key="4">
    <citation type="submission" date="2002-03" db="EMBL/GenBank/DDBJ databases">
        <title>Full-length cDNA from Arabidopsis thaliana.</title>
        <authorList>
            <person name="Brover V.V."/>
            <person name="Troukhan M.E."/>
            <person name="Alexandrov N.A."/>
            <person name="Lu Y.-P."/>
            <person name="Flavell R.B."/>
            <person name="Feldmann K.A."/>
        </authorList>
    </citation>
    <scope>NUCLEOTIDE SEQUENCE [LARGE SCALE MRNA]</scope>
</reference>
<reference key="5">
    <citation type="journal article" date="2012" name="Mol. Cell. Proteomics">
        <title>Comparative large-scale characterisation of plant vs. mammal proteins reveals similar and idiosyncratic N-alpha acetylation features.</title>
        <authorList>
            <person name="Bienvenut W.V."/>
            <person name="Sumpton D."/>
            <person name="Martinez A."/>
            <person name="Lilla S."/>
            <person name="Espagne C."/>
            <person name="Meinnel T."/>
            <person name="Giglione C."/>
        </authorList>
    </citation>
    <scope>ACETYLATION [LARGE SCALE ANALYSIS] AT ALA-2</scope>
    <scope>CLEAVAGE OF INITIATOR METHIONINE [LARGE SCALE ANALYSIS]</scope>
    <scope>IDENTIFICATION BY MASS SPECTROMETRY [LARGE SCALE ANALYSIS]</scope>
</reference>
<evidence type="ECO:0000250" key="1"/>
<evidence type="ECO:0000255" key="2"/>
<evidence type="ECO:0000305" key="3"/>
<evidence type="ECO:0007744" key="4">
    <source>
    </source>
</evidence>
<keyword id="KW-0007">Acetylation</keyword>
<keyword id="KW-0025">Alternative splicing</keyword>
<keyword id="KW-0333">Golgi apparatus</keyword>
<keyword id="KW-0472">Membrane</keyword>
<keyword id="KW-0653">Protein transport</keyword>
<keyword id="KW-1185">Reference proteome</keyword>
<keyword id="KW-0812">Transmembrane</keyword>
<keyword id="KW-1133">Transmembrane helix</keyword>
<keyword id="KW-0813">Transport</keyword>
<proteinExistence type="evidence at protein level"/>
<accession>Q9SJL6</accession>